<name>CEL6A_PYRO7</name>
<proteinExistence type="evidence at protein level"/>
<accession>G4MM92</accession>
<evidence type="ECO:0000250" key="1">
    <source>
        <dbReference type="UniProtKB" id="Q9C1S9"/>
    </source>
</evidence>
<evidence type="ECO:0000255" key="2"/>
<evidence type="ECO:0000255" key="3">
    <source>
        <dbReference type="PROSITE-ProRule" id="PRU00597"/>
    </source>
</evidence>
<evidence type="ECO:0000255" key="4">
    <source>
        <dbReference type="PROSITE-ProRule" id="PRU10056"/>
    </source>
</evidence>
<evidence type="ECO:0000255" key="5">
    <source>
        <dbReference type="PROSITE-ProRule" id="PRU10057"/>
    </source>
</evidence>
<evidence type="ECO:0000256" key="6">
    <source>
        <dbReference type="SAM" id="MobiDB-lite"/>
    </source>
</evidence>
<evidence type="ECO:0000269" key="7">
    <source>
    </source>
</evidence>
<evidence type="ECO:0000303" key="8">
    <source>
    </source>
</evidence>
<evidence type="ECO:0000305" key="9"/>
<reference key="1">
    <citation type="journal article" date="2005" name="Nature">
        <title>The genome sequence of the rice blast fungus Magnaporthe grisea.</title>
        <authorList>
            <person name="Dean R.A."/>
            <person name="Talbot N.J."/>
            <person name="Ebbole D.J."/>
            <person name="Farman M.L."/>
            <person name="Mitchell T.K."/>
            <person name="Orbach M.J."/>
            <person name="Thon M.R."/>
            <person name="Kulkarni R."/>
            <person name="Xu J.-R."/>
            <person name="Pan H."/>
            <person name="Read N.D."/>
            <person name="Lee Y.-H."/>
            <person name="Carbone I."/>
            <person name="Brown D."/>
            <person name="Oh Y.Y."/>
            <person name="Donofrio N."/>
            <person name="Jeong J.S."/>
            <person name="Soanes D.M."/>
            <person name="Djonovic S."/>
            <person name="Kolomiets E."/>
            <person name="Rehmeyer C."/>
            <person name="Li W."/>
            <person name="Harding M."/>
            <person name="Kim S."/>
            <person name="Lebrun M.-H."/>
            <person name="Bohnert H."/>
            <person name="Coughlan S."/>
            <person name="Butler J."/>
            <person name="Calvo S.E."/>
            <person name="Ma L.-J."/>
            <person name="Nicol R."/>
            <person name="Purcell S."/>
            <person name="Nusbaum C."/>
            <person name="Galagan J.E."/>
            <person name="Birren B.W."/>
        </authorList>
    </citation>
    <scope>NUCLEOTIDE SEQUENCE [LARGE SCALE GENOMIC DNA]</scope>
    <source>
        <strain>70-15 / ATCC MYA-4617 / FGSC 8958</strain>
    </source>
</reference>
<reference key="2">
    <citation type="journal article" date="2010" name="Appl. Environ. Microbiol.">
        <title>Characterization of a cellobiohydrolase (MoCel6A) produced by Magnaporthe oryzae.</title>
        <authorList>
            <person name="Takahashi M."/>
            <person name="Takahashi H."/>
            <person name="Nakano Y."/>
            <person name="Konishi T."/>
            <person name="Terauchi R."/>
            <person name="Takeda T."/>
        </authorList>
    </citation>
    <scope>FUNCTION</scope>
    <scope>CATALYTIC ACTIVITY</scope>
    <scope>BIOPHYSICOCHEMICAL PROPERTIES</scope>
    <scope>INDUCTION</scope>
</reference>
<comment type="function">
    <text evidence="7">Exoglucanase that plays an important function in biomass degradation by catalyzing the hydrolysis of the non-reducing end beta-1,4-glucosidic linkages in cellulose and cellotetraose to release cellobiose. Shows higher hydrolytic activities on phosphoric acid-swollen cellulose (PSC), beta-glucan, and cellooligosaccharide derivatives than on cellulose, of which the best substrates were cellooligosaccharides.</text>
</comment>
<comment type="catalytic activity">
    <reaction evidence="7">
        <text>Hydrolysis of (1-&gt;4)-beta-D-glucosidic linkages in cellulose and cellotetraose, releasing cellobiose from the non-reducing ends of the chains.</text>
        <dbReference type="EC" id="3.2.1.91"/>
    </reaction>
</comment>
<comment type="biophysicochemical properties">
    <kinetics>
        <KM evidence="7">24.3 mM for cellotetraose</KM>
        <Vmax evidence="7">454.5 umol/min/mg enzyme toward cellotetraose</Vmax>
    </kinetics>
    <phDependence>
        <text evidence="7">Optimum pH is 4.5-9.0.</text>
    </phDependence>
    <temperatureDependence>
        <text evidence="7">Optimum temperature is 30-50 degrees Celsius.</text>
    </temperatureDependence>
</comment>
<comment type="subcellular location">
    <subcellularLocation>
        <location evidence="9">Secreted</location>
    </subcellularLocation>
</comment>
<comment type="induction">
    <text evidence="7">Expression increases during infection of rice.</text>
</comment>
<comment type="miscellaneous">
    <text evidence="9">The biological conversion of cellulose to glucose generally requires three types of hydrolytic enzymes: (1) Endoglucanases which cut internal beta-1,4-glucosidic bonds; (2) Exocellobiohydrolases that cut the disaccharide cellobiose from the non-reducing end of the cellulose polymer chain; (3) Beta-1,4-glucosidases which hydrolyze the cellobiose and other short cello-oligosaccharides to glucose.</text>
</comment>
<comment type="similarity">
    <text evidence="9">Belongs to the glycosyl hydrolase 6 (cellulase B) family.</text>
</comment>
<feature type="signal peptide" evidence="2">
    <location>
        <begin position="1"/>
        <end position="17"/>
    </location>
</feature>
<feature type="chain" id="PRO_5001345334" description="1,4-beta-D-glucan cellobiohydrolase CEL6A" evidence="2">
    <location>
        <begin position="18"/>
        <end position="487"/>
    </location>
</feature>
<feature type="domain" description="CBM1" evidence="3">
    <location>
        <begin position="27"/>
        <end position="63"/>
    </location>
</feature>
<feature type="region of interest" description="Disordered" evidence="6">
    <location>
        <begin position="64"/>
        <end position="127"/>
    </location>
</feature>
<feature type="compositionally biased region" description="Low complexity" evidence="6">
    <location>
        <begin position="64"/>
        <end position="117"/>
    </location>
</feature>
<feature type="active site" evidence="4">
    <location>
        <position position="216"/>
    </location>
</feature>
<feature type="active site" description="Proton donor" evidence="5">
    <location>
        <position position="262"/>
    </location>
</feature>
<feature type="active site" description="Proton acceptor" evidence="1 4">
    <location>
        <position position="441"/>
    </location>
</feature>
<feature type="binding site" evidence="1">
    <location>
        <position position="175"/>
    </location>
    <ligand>
        <name>substrate</name>
    </ligand>
</feature>
<feature type="binding site" evidence="1">
    <location>
        <position position="177"/>
    </location>
    <ligand>
        <name>substrate</name>
    </ligand>
</feature>
<feature type="binding site" evidence="1">
    <location>
        <position position="307"/>
    </location>
    <ligand>
        <name>substrate</name>
    </ligand>
</feature>
<feature type="binding site" evidence="1">
    <location>
        <position position="310"/>
    </location>
    <ligand>
        <name>substrate</name>
    </ligand>
</feature>
<feature type="binding site" evidence="1">
    <location>
        <position position="346"/>
    </location>
    <ligand>
        <name>substrate</name>
    </ligand>
</feature>
<feature type="binding site" evidence="1">
    <location>
        <position position="407"/>
    </location>
    <ligand>
        <name>substrate</name>
    </ligand>
</feature>
<feature type="binding site" evidence="1">
    <location>
        <position position="435"/>
    </location>
    <ligand>
        <name>substrate</name>
    </ligand>
</feature>
<feature type="binding site" evidence="1">
    <location>
        <position position="439"/>
    </location>
    <ligand>
        <name>substrate</name>
    </ligand>
</feature>
<feature type="disulfide bond" evidence="1">
    <location>
        <begin position="35"/>
        <end position="52"/>
    </location>
</feature>
<feature type="disulfide bond" evidence="1">
    <location>
        <begin position="46"/>
        <end position="62"/>
    </location>
</feature>
<protein>
    <recommendedName>
        <fullName evidence="9">1,4-beta-D-glucan cellobiohydrolase CEL6A</fullName>
        <ecNumber evidence="7">3.2.1.91</ecNumber>
    </recommendedName>
    <alternativeName>
        <fullName evidence="9">Beta-glucancellobiohydrolase CEL6A</fullName>
    </alternativeName>
    <alternativeName>
        <fullName evidence="9">Exocellobiohydrolase CEL6A</fullName>
    </alternativeName>
    <alternativeName>
        <fullName evidence="9">Exoglucanase CEL6A</fullName>
    </alternativeName>
</protein>
<organism>
    <name type="scientific">Pyricularia oryzae (strain 70-15 / ATCC MYA-4617 / FGSC 8958)</name>
    <name type="common">Rice blast fungus</name>
    <name type="synonym">Magnaporthe oryzae</name>
    <dbReference type="NCBI Taxonomy" id="242507"/>
    <lineage>
        <taxon>Eukaryota</taxon>
        <taxon>Fungi</taxon>
        <taxon>Dikarya</taxon>
        <taxon>Ascomycota</taxon>
        <taxon>Pezizomycotina</taxon>
        <taxon>Sordariomycetes</taxon>
        <taxon>Sordariomycetidae</taxon>
        <taxon>Magnaporthales</taxon>
        <taxon>Pyriculariaceae</taxon>
        <taxon>Pyricularia</taxon>
    </lineage>
</organism>
<keyword id="KW-0119">Carbohydrate metabolism</keyword>
<keyword id="KW-0136">Cellulose degradation</keyword>
<keyword id="KW-1015">Disulfide bond</keyword>
<keyword id="KW-0326">Glycosidase</keyword>
<keyword id="KW-0378">Hydrolase</keyword>
<keyword id="KW-0624">Polysaccharide degradation</keyword>
<keyword id="KW-1185">Reference proteome</keyword>
<keyword id="KW-0964">Secreted</keyword>
<keyword id="KW-0732">Signal</keyword>
<gene>
    <name evidence="8" type="primary">cel6A</name>
    <name type="ORF">MGG_05520</name>
</gene>
<dbReference type="EC" id="3.2.1.91" evidence="7"/>
<dbReference type="EMBL" id="CM001231">
    <property type="protein sequence ID" value="EHA57773.1"/>
    <property type="molecule type" value="Genomic_DNA"/>
</dbReference>
<dbReference type="RefSeq" id="XP_003710385.1">
    <property type="nucleotide sequence ID" value="XM_003710337.1"/>
</dbReference>
<dbReference type="SMR" id="G4MM92"/>
<dbReference type="STRING" id="242507.G4MM92"/>
<dbReference type="CAZy" id="CBM1">
    <property type="family name" value="Carbohydrate-Binding Module Family 1"/>
</dbReference>
<dbReference type="CAZy" id="GH6">
    <property type="family name" value="Glycoside Hydrolase Family 6"/>
</dbReference>
<dbReference type="EnsemblFungi" id="MGG_05520T0">
    <property type="protein sequence ID" value="MGG_05520T0"/>
    <property type="gene ID" value="MGG_05520"/>
</dbReference>
<dbReference type="GeneID" id="2675858"/>
<dbReference type="KEGG" id="mgr:MGG_05520"/>
<dbReference type="VEuPathDB" id="FungiDB:MGG_05520"/>
<dbReference type="eggNOG" id="ENOG502QWHE">
    <property type="taxonomic scope" value="Eukaryota"/>
</dbReference>
<dbReference type="HOGENOM" id="CLU_015488_0_0_1"/>
<dbReference type="InParanoid" id="G4MM92"/>
<dbReference type="OMA" id="EVHTLAM"/>
<dbReference type="OrthoDB" id="64893at2759"/>
<dbReference type="Proteomes" id="UP000009058">
    <property type="component" value="Chromosome 1"/>
</dbReference>
<dbReference type="GO" id="GO:0005576">
    <property type="term" value="C:extracellular region"/>
    <property type="evidence" value="ECO:0007669"/>
    <property type="project" value="UniProtKB-SubCell"/>
</dbReference>
<dbReference type="GO" id="GO:0016162">
    <property type="term" value="F:cellulose 1,4-beta-cellobiosidase activity"/>
    <property type="evidence" value="ECO:0007669"/>
    <property type="project" value="UniProtKB-EC"/>
</dbReference>
<dbReference type="GO" id="GO:0030248">
    <property type="term" value="F:cellulose binding"/>
    <property type="evidence" value="ECO:0007669"/>
    <property type="project" value="InterPro"/>
</dbReference>
<dbReference type="GO" id="GO:0030245">
    <property type="term" value="P:cellulose catabolic process"/>
    <property type="evidence" value="ECO:0007669"/>
    <property type="project" value="UniProtKB-KW"/>
</dbReference>
<dbReference type="FunFam" id="3.20.20.40:FF:000001">
    <property type="entry name" value="Glucanase"/>
    <property type="match status" value="1"/>
</dbReference>
<dbReference type="Gene3D" id="3.20.20.40">
    <property type="entry name" value="1, 4-beta cellobiohydrolase"/>
    <property type="match status" value="1"/>
</dbReference>
<dbReference type="InterPro" id="IPR016288">
    <property type="entry name" value="Beta_cellobiohydrolase"/>
</dbReference>
<dbReference type="InterPro" id="IPR036434">
    <property type="entry name" value="Beta_cellobiohydrolase_sf"/>
</dbReference>
<dbReference type="InterPro" id="IPR035971">
    <property type="entry name" value="CBD_sf"/>
</dbReference>
<dbReference type="InterPro" id="IPR000254">
    <property type="entry name" value="Cellulose-bd_dom_fun"/>
</dbReference>
<dbReference type="InterPro" id="IPR001524">
    <property type="entry name" value="Glyco_hydro_6_CS"/>
</dbReference>
<dbReference type="PANTHER" id="PTHR34876">
    <property type="match status" value="1"/>
</dbReference>
<dbReference type="PANTHER" id="PTHR34876:SF4">
    <property type="entry name" value="1,4-BETA-D-GLUCAN CELLOBIOHYDROLASE C-RELATED"/>
    <property type="match status" value="1"/>
</dbReference>
<dbReference type="Pfam" id="PF00734">
    <property type="entry name" value="CBM_1"/>
    <property type="match status" value="1"/>
</dbReference>
<dbReference type="Pfam" id="PF01341">
    <property type="entry name" value="Glyco_hydro_6"/>
    <property type="match status" value="1"/>
</dbReference>
<dbReference type="PIRSF" id="PIRSF001100">
    <property type="entry name" value="Beta_cellobiohydrolase"/>
    <property type="match status" value="1"/>
</dbReference>
<dbReference type="PRINTS" id="PR00733">
    <property type="entry name" value="GLHYDRLASE6"/>
</dbReference>
<dbReference type="SMART" id="SM00236">
    <property type="entry name" value="fCBD"/>
    <property type="match status" value="1"/>
</dbReference>
<dbReference type="SUPFAM" id="SSF57180">
    <property type="entry name" value="Cellulose-binding domain"/>
    <property type="match status" value="1"/>
</dbReference>
<dbReference type="SUPFAM" id="SSF51989">
    <property type="entry name" value="Glycosyl hydrolases family 6, cellulases"/>
    <property type="match status" value="1"/>
</dbReference>
<dbReference type="PROSITE" id="PS00562">
    <property type="entry name" value="CBM1_1"/>
    <property type="match status" value="1"/>
</dbReference>
<dbReference type="PROSITE" id="PS51164">
    <property type="entry name" value="CBM1_2"/>
    <property type="match status" value="1"/>
</dbReference>
<dbReference type="PROSITE" id="PS00655">
    <property type="entry name" value="GLYCOSYL_HYDROL_F6_1"/>
    <property type="match status" value="1"/>
</dbReference>
<dbReference type="PROSITE" id="PS00656">
    <property type="entry name" value="GLYCOSYL_HYDROL_F6_2"/>
    <property type="match status" value="1"/>
</dbReference>
<sequence length="487" mass="51225">MASKLFLAAALLQGALSSPLAVEERQACAAQWGQCGGQDYTGPTCCQSGSTCVVSNQWYSQCLPGSSNPTTTSRTSTSSSSSTSRTSSSTSRPPSSVPTTPTSVPPTITTTPTTTPTGGSGPGTTASFTGNPFAGVNLFPNKFYSSEVHTLAIPSLTGSLVAKASAVAQVPSFQWLDIAAKVETLMPGALADVRAANAAGGNYAAQLVVYDLPDRDCAAAASNGEFSIADGGVVKYKAYIDAIRKQLLAYSDVRTILVIEPDSLANMVTNMGVPKCAGAKDAYLECTIYAVKQLNLPHVAMYLDGGHAGWLGWPANLQPAADLFGKLYADAGKPSQLRGMATNVANYNAWDLTTAPSYTTPNPNFDEKKYISAFAPLLAAKGWSAHFIIDQGRSGKQPTGQKEWGHWCNQQGVGFGRRPSANTGSELADAFVWIKPGGECDGVSDPTAPRFDHFCGTDYGAMSDAPQAGQWFQKYFEMLLTNANPPL</sequence>